<feature type="chain" id="PRO_0000158520" description="Ribose-5-phosphate isomerase A">
    <location>
        <begin position="1"/>
        <end position="241"/>
    </location>
</feature>
<feature type="active site" description="Proton acceptor" evidence="1">
    <location>
        <position position="106"/>
    </location>
</feature>
<feature type="binding site" evidence="1">
    <location>
        <begin position="29"/>
        <end position="32"/>
    </location>
    <ligand>
        <name>substrate</name>
    </ligand>
</feature>
<feature type="binding site" evidence="1">
    <location>
        <begin position="84"/>
        <end position="87"/>
    </location>
    <ligand>
        <name>substrate</name>
    </ligand>
</feature>
<feature type="binding site" evidence="1">
    <location>
        <begin position="97"/>
        <end position="100"/>
    </location>
    <ligand>
        <name>substrate</name>
    </ligand>
</feature>
<feature type="binding site" evidence="1">
    <location>
        <position position="124"/>
    </location>
    <ligand>
        <name>substrate</name>
    </ligand>
</feature>
<accession>Q97AU2</accession>
<proteinExistence type="inferred from homology"/>
<reference key="1">
    <citation type="journal article" date="2000" name="Proc. Natl. Acad. Sci. U.S.A.">
        <title>Archaeal adaptation to higher temperatures revealed by genomic sequence of Thermoplasma volcanium.</title>
        <authorList>
            <person name="Kawashima T."/>
            <person name="Amano N."/>
            <person name="Koike H."/>
            <person name="Makino S."/>
            <person name="Higuchi S."/>
            <person name="Kawashima-Ohya Y."/>
            <person name="Watanabe K."/>
            <person name="Yamazaki M."/>
            <person name="Kanehori K."/>
            <person name="Kawamoto T."/>
            <person name="Nunoshiba T."/>
            <person name="Yamamoto Y."/>
            <person name="Aramaki H."/>
            <person name="Makino K."/>
            <person name="Suzuki M."/>
        </authorList>
    </citation>
    <scope>NUCLEOTIDE SEQUENCE [LARGE SCALE GENOMIC DNA]</scope>
    <source>
        <strain>ATCC 51530 / DSM 4299 / JCM 9571 / NBRC 15438 / GSS1</strain>
    </source>
</reference>
<dbReference type="EC" id="5.3.1.6" evidence="1"/>
<dbReference type="EMBL" id="BA000011">
    <property type="protein sequence ID" value="BAB59859.1"/>
    <property type="molecule type" value="Genomic_DNA"/>
</dbReference>
<dbReference type="RefSeq" id="WP_010916975.1">
    <property type="nucleotide sequence ID" value="NC_002689.2"/>
</dbReference>
<dbReference type="SMR" id="Q97AU2"/>
<dbReference type="STRING" id="273116.gene:9381506"/>
<dbReference type="PaxDb" id="273116-14324933"/>
<dbReference type="GeneID" id="1441823"/>
<dbReference type="KEGG" id="tvo:TVG0723257"/>
<dbReference type="eggNOG" id="arCOG01122">
    <property type="taxonomic scope" value="Archaea"/>
</dbReference>
<dbReference type="HOGENOM" id="CLU_056590_1_0_2"/>
<dbReference type="OrthoDB" id="19013at2157"/>
<dbReference type="PhylomeDB" id="Q97AU2"/>
<dbReference type="UniPathway" id="UPA00115">
    <property type="reaction ID" value="UER00412"/>
</dbReference>
<dbReference type="Proteomes" id="UP000001017">
    <property type="component" value="Chromosome"/>
</dbReference>
<dbReference type="GO" id="GO:0005829">
    <property type="term" value="C:cytosol"/>
    <property type="evidence" value="ECO:0007669"/>
    <property type="project" value="TreeGrafter"/>
</dbReference>
<dbReference type="GO" id="GO:0004751">
    <property type="term" value="F:ribose-5-phosphate isomerase activity"/>
    <property type="evidence" value="ECO:0007669"/>
    <property type="project" value="UniProtKB-UniRule"/>
</dbReference>
<dbReference type="GO" id="GO:0006014">
    <property type="term" value="P:D-ribose metabolic process"/>
    <property type="evidence" value="ECO:0007669"/>
    <property type="project" value="TreeGrafter"/>
</dbReference>
<dbReference type="GO" id="GO:0009052">
    <property type="term" value="P:pentose-phosphate shunt, non-oxidative branch"/>
    <property type="evidence" value="ECO:0007669"/>
    <property type="project" value="UniProtKB-UniRule"/>
</dbReference>
<dbReference type="CDD" id="cd01398">
    <property type="entry name" value="RPI_A"/>
    <property type="match status" value="1"/>
</dbReference>
<dbReference type="FunFam" id="3.40.50.1360:FF:000001">
    <property type="entry name" value="Ribose-5-phosphate isomerase A"/>
    <property type="match status" value="1"/>
</dbReference>
<dbReference type="Gene3D" id="3.30.70.260">
    <property type="match status" value="1"/>
</dbReference>
<dbReference type="Gene3D" id="3.40.50.1360">
    <property type="match status" value="1"/>
</dbReference>
<dbReference type="HAMAP" id="MF_00170">
    <property type="entry name" value="Rib_5P_isom_A"/>
    <property type="match status" value="1"/>
</dbReference>
<dbReference type="InterPro" id="IPR037171">
    <property type="entry name" value="NagB/RpiA_transferase-like"/>
</dbReference>
<dbReference type="InterPro" id="IPR020672">
    <property type="entry name" value="Ribose5P_isomerase_typA_subgr"/>
</dbReference>
<dbReference type="InterPro" id="IPR004788">
    <property type="entry name" value="Ribose5P_isomerase_type_A"/>
</dbReference>
<dbReference type="NCBIfam" id="NF001924">
    <property type="entry name" value="PRK00702.1"/>
    <property type="match status" value="1"/>
</dbReference>
<dbReference type="NCBIfam" id="TIGR00021">
    <property type="entry name" value="rpiA"/>
    <property type="match status" value="1"/>
</dbReference>
<dbReference type="PANTHER" id="PTHR11934">
    <property type="entry name" value="RIBOSE-5-PHOSPHATE ISOMERASE"/>
    <property type="match status" value="1"/>
</dbReference>
<dbReference type="PANTHER" id="PTHR11934:SF0">
    <property type="entry name" value="RIBOSE-5-PHOSPHATE ISOMERASE"/>
    <property type="match status" value="1"/>
</dbReference>
<dbReference type="Pfam" id="PF06026">
    <property type="entry name" value="Rib_5-P_isom_A"/>
    <property type="match status" value="1"/>
</dbReference>
<dbReference type="SUPFAM" id="SSF75445">
    <property type="entry name" value="D-ribose-5-phosphate isomerase (RpiA), lid domain"/>
    <property type="match status" value="1"/>
</dbReference>
<dbReference type="SUPFAM" id="SSF100950">
    <property type="entry name" value="NagB/RpiA/CoA transferase-like"/>
    <property type="match status" value="1"/>
</dbReference>
<organism>
    <name type="scientific">Thermoplasma volcanium (strain ATCC 51530 / DSM 4299 / JCM 9571 / NBRC 15438 / GSS1)</name>
    <dbReference type="NCBI Taxonomy" id="273116"/>
    <lineage>
        <taxon>Archaea</taxon>
        <taxon>Methanobacteriati</taxon>
        <taxon>Thermoplasmatota</taxon>
        <taxon>Thermoplasmata</taxon>
        <taxon>Thermoplasmatales</taxon>
        <taxon>Thermoplasmataceae</taxon>
        <taxon>Thermoplasma</taxon>
    </lineage>
</organism>
<gene>
    <name evidence="1" type="primary">rpiA</name>
    <name type="ordered locus">TV0717</name>
    <name type="ORF">TVG0723257</name>
</gene>
<name>RPIA_THEVO</name>
<comment type="function">
    <text evidence="1">Catalyzes the reversible conversion of ribose-5-phosphate to ribulose 5-phosphate.</text>
</comment>
<comment type="catalytic activity">
    <reaction evidence="1">
        <text>aldehydo-D-ribose 5-phosphate = D-ribulose 5-phosphate</text>
        <dbReference type="Rhea" id="RHEA:14657"/>
        <dbReference type="ChEBI" id="CHEBI:58121"/>
        <dbReference type="ChEBI" id="CHEBI:58273"/>
        <dbReference type="EC" id="5.3.1.6"/>
    </reaction>
</comment>
<comment type="pathway">
    <text evidence="1">Carbohydrate degradation; pentose phosphate pathway; D-ribose 5-phosphate from D-ribulose 5-phosphate (non-oxidative stage): step 1/1.</text>
</comment>
<comment type="subunit">
    <text evidence="1">Homodimer.</text>
</comment>
<comment type="similarity">
    <text evidence="1">Belongs to the ribose 5-phosphate isomerase family.</text>
</comment>
<keyword id="KW-0413">Isomerase</keyword>
<evidence type="ECO:0000255" key="1">
    <source>
        <dbReference type="HAMAP-Rule" id="MF_00170"/>
    </source>
</evidence>
<protein>
    <recommendedName>
        <fullName evidence="1">Ribose-5-phosphate isomerase A</fullName>
        <ecNumber evidence="1">5.3.1.6</ecNumber>
    </recommendedName>
    <alternativeName>
        <fullName evidence="1">Phosphoriboisomerase A</fullName>
        <shortName evidence="1">PRI</shortName>
    </alternativeName>
</protein>
<sequence length="241" mass="26734">MPDYEKQKRNAAVEAASYVKTGMVIGIGTGTTARYLIEELGRRVSEENLKIKGVCTSKKSEELARAAGIEISENPEQIIDLTIDGADQVNLHGTLIKGGGGALLREKIVAYNSKEMYVIVDSRKIDDENFGSFPLPVEVVPFLHRMTLENLRKICPSTDLRKNSDGTLFITDNGNYIADMKFGRIRETNELEKKIKSIPGVVDVGLFNNIADKIFEGNDDGCNIYVVSEKGRIEKEKGQFK</sequence>